<protein>
    <recommendedName>
        <fullName evidence="1">Uracil-DNA glycosylase</fullName>
        <shortName evidence="1">UDG</shortName>
        <ecNumber evidence="1">3.2.2.27</ecNumber>
    </recommendedName>
</protein>
<name>UNG_RUEST</name>
<comment type="function">
    <text evidence="1">Excises uracil residues from the DNA which can arise as a result of misincorporation of dUMP residues by DNA polymerase or due to deamination of cytosine.</text>
</comment>
<comment type="catalytic activity">
    <reaction evidence="1">
        <text>Hydrolyzes single-stranded DNA or mismatched double-stranded DNA and polynucleotides, releasing free uracil.</text>
        <dbReference type="EC" id="3.2.2.27"/>
    </reaction>
</comment>
<comment type="subcellular location">
    <subcellularLocation>
        <location evidence="1">Cytoplasm</location>
    </subcellularLocation>
</comment>
<comment type="similarity">
    <text evidence="1">Belongs to the uracil-DNA glycosylase (UDG) superfamily. UNG family.</text>
</comment>
<proteinExistence type="inferred from homology"/>
<accession>Q1GHJ4</accession>
<gene>
    <name evidence="1" type="primary">ung</name>
    <name type="ordered locus">TM1040_1139</name>
</gene>
<dbReference type="EC" id="3.2.2.27" evidence="1"/>
<dbReference type="EMBL" id="CP000377">
    <property type="protein sequence ID" value="ABF63872.1"/>
    <property type="molecule type" value="Genomic_DNA"/>
</dbReference>
<dbReference type="RefSeq" id="WP_011538479.1">
    <property type="nucleotide sequence ID" value="NC_008044.1"/>
</dbReference>
<dbReference type="SMR" id="Q1GHJ4"/>
<dbReference type="STRING" id="292414.TM1040_1139"/>
<dbReference type="KEGG" id="sit:TM1040_1139"/>
<dbReference type="eggNOG" id="COG0692">
    <property type="taxonomic scope" value="Bacteria"/>
</dbReference>
<dbReference type="HOGENOM" id="CLU_032162_3_1_5"/>
<dbReference type="OrthoDB" id="9804372at2"/>
<dbReference type="Proteomes" id="UP000000636">
    <property type="component" value="Chromosome"/>
</dbReference>
<dbReference type="GO" id="GO:0005737">
    <property type="term" value="C:cytoplasm"/>
    <property type="evidence" value="ECO:0007669"/>
    <property type="project" value="UniProtKB-SubCell"/>
</dbReference>
<dbReference type="GO" id="GO:0004844">
    <property type="term" value="F:uracil DNA N-glycosylase activity"/>
    <property type="evidence" value="ECO:0007669"/>
    <property type="project" value="UniProtKB-UniRule"/>
</dbReference>
<dbReference type="GO" id="GO:0097510">
    <property type="term" value="P:base-excision repair, AP site formation via deaminated base removal"/>
    <property type="evidence" value="ECO:0007669"/>
    <property type="project" value="TreeGrafter"/>
</dbReference>
<dbReference type="CDD" id="cd10027">
    <property type="entry name" value="UDG-F1-like"/>
    <property type="match status" value="1"/>
</dbReference>
<dbReference type="Gene3D" id="3.40.470.10">
    <property type="entry name" value="Uracil-DNA glycosylase-like domain"/>
    <property type="match status" value="1"/>
</dbReference>
<dbReference type="HAMAP" id="MF_00148">
    <property type="entry name" value="UDG"/>
    <property type="match status" value="1"/>
</dbReference>
<dbReference type="InterPro" id="IPR002043">
    <property type="entry name" value="UDG_fam1"/>
</dbReference>
<dbReference type="InterPro" id="IPR018085">
    <property type="entry name" value="Ura-DNA_Glyclase_AS"/>
</dbReference>
<dbReference type="InterPro" id="IPR005122">
    <property type="entry name" value="Uracil-DNA_glycosylase-like"/>
</dbReference>
<dbReference type="InterPro" id="IPR036895">
    <property type="entry name" value="Uracil-DNA_glycosylase-like_sf"/>
</dbReference>
<dbReference type="NCBIfam" id="NF003588">
    <property type="entry name" value="PRK05254.1-1"/>
    <property type="match status" value="1"/>
</dbReference>
<dbReference type="NCBIfam" id="NF003589">
    <property type="entry name" value="PRK05254.1-2"/>
    <property type="match status" value="1"/>
</dbReference>
<dbReference type="NCBIfam" id="NF003592">
    <property type="entry name" value="PRK05254.1-5"/>
    <property type="match status" value="1"/>
</dbReference>
<dbReference type="NCBIfam" id="TIGR00628">
    <property type="entry name" value="ung"/>
    <property type="match status" value="1"/>
</dbReference>
<dbReference type="PANTHER" id="PTHR11264">
    <property type="entry name" value="URACIL-DNA GLYCOSYLASE"/>
    <property type="match status" value="1"/>
</dbReference>
<dbReference type="PANTHER" id="PTHR11264:SF0">
    <property type="entry name" value="URACIL-DNA GLYCOSYLASE"/>
    <property type="match status" value="1"/>
</dbReference>
<dbReference type="Pfam" id="PF03167">
    <property type="entry name" value="UDG"/>
    <property type="match status" value="1"/>
</dbReference>
<dbReference type="SMART" id="SM00986">
    <property type="entry name" value="UDG"/>
    <property type="match status" value="1"/>
</dbReference>
<dbReference type="SMART" id="SM00987">
    <property type="entry name" value="UreE_C"/>
    <property type="match status" value="1"/>
</dbReference>
<dbReference type="SUPFAM" id="SSF52141">
    <property type="entry name" value="Uracil-DNA glycosylase-like"/>
    <property type="match status" value="1"/>
</dbReference>
<dbReference type="PROSITE" id="PS00130">
    <property type="entry name" value="U_DNA_GLYCOSYLASE"/>
    <property type="match status" value="1"/>
</dbReference>
<sequence length="234" mass="25792">MAPQDHASALRPAVGGWAELPFFETHWPRIEAALAQETRQILPPAHQRFAALERTPPESTRVVILGQDPYPTPGHAHGLSFSVEPDVTPLPRSLRNIYQEMRDDLGTCPETGDLRPWAAQGVLLLNTVLSVPAGEANGHKSLGWQELAHQVLDLSSRRPTAYVLWGNQAQKLESHIRPGDHLIVKTAHPSPLSARRGFFGSRVFSAINDWLTARGEPPITWADPRPAQGSIFDV</sequence>
<keyword id="KW-0963">Cytoplasm</keyword>
<keyword id="KW-0227">DNA damage</keyword>
<keyword id="KW-0234">DNA repair</keyword>
<keyword id="KW-0378">Hydrolase</keyword>
<keyword id="KW-1185">Reference proteome</keyword>
<evidence type="ECO:0000255" key="1">
    <source>
        <dbReference type="HAMAP-Rule" id="MF_00148"/>
    </source>
</evidence>
<organism>
    <name type="scientific">Ruegeria sp. (strain TM1040)</name>
    <name type="common">Silicibacter sp.</name>
    <dbReference type="NCBI Taxonomy" id="292414"/>
    <lineage>
        <taxon>Bacteria</taxon>
        <taxon>Pseudomonadati</taxon>
        <taxon>Pseudomonadota</taxon>
        <taxon>Alphaproteobacteria</taxon>
        <taxon>Rhodobacterales</taxon>
        <taxon>Roseobacteraceae</taxon>
        <taxon>Ruegeria</taxon>
    </lineage>
</organism>
<reference key="1">
    <citation type="submission" date="2006-05" db="EMBL/GenBank/DDBJ databases">
        <title>Complete sequence of chromosome of Silicibacter sp. TM1040.</title>
        <authorList>
            <consortium name="US DOE Joint Genome Institute"/>
            <person name="Copeland A."/>
            <person name="Lucas S."/>
            <person name="Lapidus A."/>
            <person name="Barry K."/>
            <person name="Detter J.C."/>
            <person name="Glavina del Rio T."/>
            <person name="Hammon N."/>
            <person name="Israni S."/>
            <person name="Dalin E."/>
            <person name="Tice H."/>
            <person name="Pitluck S."/>
            <person name="Brettin T."/>
            <person name="Bruce D."/>
            <person name="Han C."/>
            <person name="Tapia R."/>
            <person name="Goodwin L."/>
            <person name="Thompson L.S."/>
            <person name="Gilna P."/>
            <person name="Schmutz J."/>
            <person name="Larimer F."/>
            <person name="Land M."/>
            <person name="Hauser L."/>
            <person name="Kyrpides N."/>
            <person name="Kim E."/>
            <person name="Belas R."/>
            <person name="Moran M.A."/>
            <person name="Buchan A."/>
            <person name="Gonzalez J.M."/>
            <person name="Schell M.A."/>
            <person name="Sun F."/>
            <person name="Richardson P."/>
        </authorList>
    </citation>
    <scope>NUCLEOTIDE SEQUENCE [LARGE SCALE GENOMIC DNA]</scope>
    <source>
        <strain>TM1040</strain>
    </source>
</reference>
<feature type="chain" id="PRO_1000199794" description="Uracil-DNA glycosylase">
    <location>
        <begin position="1"/>
        <end position="234"/>
    </location>
</feature>
<feature type="active site" description="Proton acceptor" evidence="1">
    <location>
        <position position="68"/>
    </location>
</feature>